<gene>
    <name evidence="1" type="primary">rihA</name>
    <name type="ordered locus">EcHS_A0696</name>
</gene>
<accession>A7ZXS0</accession>
<organism>
    <name type="scientific">Escherichia coli O9:H4 (strain HS)</name>
    <dbReference type="NCBI Taxonomy" id="331112"/>
    <lineage>
        <taxon>Bacteria</taxon>
        <taxon>Pseudomonadati</taxon>
        <taxon>Pseudomonadota</taxon>
        <taxon>Gammaproteobacteria</taxon>
        <taxon>Enterobacterales</taxon>
        <taxon>Enterobacteriaceae</taxon>
        <taxon>Escherichia</taxon>
    </lineage>
</organism>
<evidence type="ECO:0000255" key="1">
    <source>
        <dbReference type="HAMAP-Rule" id="MF_01431"/>
    </source>
</evidence>
<sequence>MALPILLDCDPGHDDAIAIVLALASPELDVKAITSSAGNQTPEKTLRNVLRMLTLLNRTDIPVAGGAVKPLMRELIIADNVHGESGLDGPALPEPAFAPQNCTAVELMAKTLRESAEPITIVSTGPQTNVALLLNSHPELHSKIARIVIMGGAMGLGNWTPAAEFNIYVDPEAAEIVFQSGIPVVMAGLDVTHRAQIHVEDTERFRAIGNPVSTIVAELLDFFLEYHKDEKWGFVGAPLHDPCTIAWLLKPELFTTVERWVGVETQGKYTQGMTVVDYYYLTGNKPNATVMVDVDRQGFVDLLADRLKFYA</sequence>
<proteinExistence type="inferred from homology"/>
<feature type="chain" id="PRO_1000068527" description="Pyrimidine-specific ribonucleoside hydrolase RihA">
    <location>
        <begin position="1"/>
        <end position="311"/>
    </location>
</feature>
<feature type="active site" evidence="1">
    <location>
        <position position="240"/>
    </location>
</feature>
<protein>
    <recommendedName>
        <fullName evidence="1">Pyrimidine-specific ribonucleoside hydrolase RihA</fullName>
        <ecNumber evidence="1">3.2.-.-</ecNumber>
    </recommendedName>
    <alternativeName>
        <fullName evidence="1">Cytidine/uridine-specific hydrolase</fullName>
    </alternativeName>
</protein>
<dbReference type="EC" id="3.2.-.-" evidence="1"/>
<dbReference type="EMBL" id="CP000802">
    <property type="protein sequence ID" value="ABV05074.1"/>
    <property type="molecule type" value="Genomic_DNA"/>
</dbReference>
<dbReference type="RefSeq" id="WP_001207499.1">
    <property type="nucleotide sequence ID" value="NC_009800.1"/>
</dbReference>
<dbReference type="SMR" id="A7ZXS0"/>
<dbReference type="KEGG" id="ecx:EcHS_A0696"/>
<dbReference type="HOGENOM" id="CLU_036838_2_0_6"/>
<dbReference type="GO" id="GO:0005829">
    <property type="term" value="C:cytosol"/>
    <property type="evidence" value="ECO:0007669"/>
    <property type="project" value="TreeGrafter"/>
</dbReference>
<dbReference type="GO" id="GO:0008477">
    <property type="term" value="F:purine nucleosidase activity"/>
    <property type="evidence" value="ECO:0007669"/>
    <property type="project" value="TreeGrafter"/>
</dbReference>
<dbReference type="GO" id="GO:0045437">
    <property type="term" value="F:uridine nucleosidase activity"/>
    <property type="evidence" value="ECO:0007669"/>
    <property type="project" value="InterPro"/>
</dbReference>
<dbReference type="GO" id="GO:0015949">
    <property type="term" value="P:nucleobase-containing small molecule interconversion"/>
    <property type="evidence" value="ECO:0007669"/>
    <property type="project" value="InterPro"/>
</dbReference>
<dbReference type="GO" id="GO:0006152">
    <property type="term" value="P:purine nucleoside catabolic process"/>
    <property type="evidence" value="ECO:0007669"/>
    <property type="project" value="TreeGrafter"/>
</dbReference>
<dbReference type="GO" id="GO:0006206">
    <property type="term" value="P:pyrimidine nucleobase metabolic process"/>
    <property type="evidence" value="ECO:0007669"/>
    <property type="project" value="UniProtKB-UniRule"/>
</dbReference>
<dbReference type="CDD" id="cd02651">
    <property type="entry name" value="nuc_hydro_IU_UC_XIUA"/>
    <property type="match status" value="1"/>
</dbReference>
<dbReference type="FunFam" id="3.90.245.10:FF:000001">
    <property type="entry name" value="Pyrimidine-specific ribonucleoside hydrolase RihA"/>
    <property type="match status" value="1"/>
</dbReference>
<dbReference type="Gene3D" id="3.90.245.10">
    <property type="entry name" value="Ribonucleoside hydrolase-like"/>
    <property type="match status" value="1"/>
</dbReference>
<dbReference type="HAMAP" id="MF_01431">
    <property type="entry name" value="Pyrim_hydro_RihA"/>
    <property type="match status" value="1"/>
</dbReference>
<dbReference type="InterPro" id="IPR015910">
    <property type="entry name" value="I/U_nuclsd_hydro_CS"/>
</dbReference>
<dbReference type="InterPro" id="IPR001910">
    <property type="entry name" value="Inosine/uridine_hydrolase_dom"/>
</dbReference>
<dbReference type="InterPro" id="IPR023186">
    <property type="entry name" value="IUNH"/>
</dbReference>
<dbReference type="InterPro" id="IPR022975">
    <property type="entry name" value="Pyrim_hydro_RihA"/>
</dbReference>
<dbReference type="InterPro" id="IPR036452">
    <property type="entry name" value="Ribo_hydro-like"/>
</dbReference>
<dbReference type="NCBIfam" id="NF007761">
    <property type="entry name" value="PRK10443.1"/>
    <property type="match status" value="1"/>
</dbReference>
<dbReference type="PANTHER" id="PTHR12304">
    <property type="entry name" value="INOSINE-URIDINE PREFERRING NUCLEOSIDE HYDROLASE"/>
    <property type="match status" value="1"/>
</dbReference>
<dbReference type="PANTHER" id="PTHR12304:SF4">
    <property type="entry name" value="URIDINE NUCLEOSIDASE"/>
    <property type="match status" value="1"/>
</dbReference>
<dbReference type="Pfam" id="PF01156">
    <property type="entry name" value="IU_nuc_hydro"/>
    <property type="match status" value="1"/>
</dbReference>
<dbReference type="SUPFAM" id="SSF53590">
    <property type="entry name" value="Nucleoside hydrolase"/>
    <property type="match status" value="1"/>
</dbReference>
<dbReference type="PROSITE" id="PS01247">
    <property type="entry name" value="IUNH"/>
    <property type="match status" value="1"/>
</dbReference>
<keyword id="KW-0326">Glycosidase</keyword>
<keyword id="KW-0378">Hydrolase</keyword>
<comment type="function">
    <text evidence="1">Hydrolyzes with equal efficiency cytidine or uridine to ribose and cytosine or uracil, respectively.</text>
</comment>
<comment type="similarity">
    <text evidence="1">Belongs to the IUNH family. RihA subfamily.</text>
</comment>
<reference key="1">
    <citation type="journal article" date="2008" name="J. Bacteriol.">
        <title>The pangenome structure of Escherichia coli: comparative genomic analysis of E. coli commensal and pathogenic isolates.</title>
        <authorList>
            <person name="Rasko D.A."/>
            <person name="Rosovitz M.J."/>
            <person name="Myers G.S.A."/>
            <person name="Mongodin E.F."/>
            <person name="Fricke W.F."/>
            <person name="Gajer P."/>
            <person name="Crabtree J."/>
            <person name="Sebaihia M."/>
            <person name="Thomson N.R."/>
            <person name="Chaudhuri R."/>
            <person name="Henderson I.R."/>
            <person name="Sperandio V."/>
            <person name="Ravel J."/>
        </authorList>
    </citation>
    <scope>NUCLEOTIDE SEQUENCE [LARGE SCALE GENOMIC DNA]</scope>
    <source>
        <strain>HS</strain>
    </source>
</reference>
<name>RIHA_ECOHS</name>